<gene>
    <name evidence="1" type="primary">nuoD1</name>
    <name type="ordered locus">Acid_0111</name>
</gene>
<feature type="chain" id="PRO_0000357931" description="NADH-quinone oxidoreductase subunit D 1">
    <location>
        <begin position="1"/>
        <end position="409"/>
    </location>
</feature>
<protein>
    <recommendedName>
        <fullName evidence="1">NADH-quinone oxidoreductase subunit D 1</fullName>
        <ecNumber evidence="1">7.1.1.-</ecNumber>
    </recommendedName>
    <alternativeName>
        <fullName evidence="1">NADH dehydrogenase I subunit D 1</fullName>
    </alternativeName>
    <alternativeName>
        <fullName evidence="1">NDH-1 subunit D 1</fullName>
    </alternativeName>
</protein>
<name>NUOD1_SOLUE</name>
<dbReference type="EC" id="7.1.1.-" evidence="1"/>
<dbReference type="EMBL" id="CP000473">
    <property type="protein sequence ID" value="ABJ81126.1"/>
    <property type="molecule type" value="Genomic_DNA"/>
</dbReference>
<dbReference type="SMR" id="Q02CU0"/>
<dbReference type="FunCoup" id="Q02CU0">
    <property type="interactions" value="452"/>
</dbReference>
<dbReference type="STRING" id="234267.Acid_0111"/>
<dbReference type="KEGG" id="sus:Acid_0111"/>
<dbReference type="eggNOG" id="COG0649">
    <property type="taxonomic scope" value="Bacteria"/>
</dbReference>
<dbReference type="HOGENOM" id="CLU_015134_1_2_0"/>
<dbReference type="InParanoid" id="Q02CU0"/>
<dbReference type="OrthoDB" id="9801496at2"/>
<dbReference type="GO" id="GO:0005886">
    <property type="term" value="C:plasma membrane"/>
    <property type="evidence" value="ECO:0007669"/>
    <property type="project" value="UniProtKB-SubCell"/>
</dbReference>
<dbReference type="GO" id="GO:0051287">
    <property type="term" value="F:NAD binding"/>
    <property type="evidence" value="ECO:0007669"/>
    <property type="project" value="InterPro"/>
</dbReference>
<dbReference type="GO" id="GO:0050136">
    <property type="term" value="F:NADH:ubiquinone reductase (non-electrogenic) activity"/>
    <property type="evidence" value="ECO:0007669"/>
    <property type="project" value="UniProtKB-UniRule"/>
</dbReference>
<dbReference type="GO" id="GO:0048038">
    <property type="term" value="F:quinone binding"/>
    <property type="evidence" value="ECO:0007669"/>
    <property type="project" value="UniProtKB-KW"/>
</dbReference>
<dbReference type="Gene3D" id="1.10.645.10">
    <property type="entry name" value="Cytochrome-c3 Hydrogenase, chain B"/>
    <property type="match status" value="1"/>
</dbReference>
<dbReference type="HAMAP" id="MF_01358">
    <property type="entry name" value="NDH1_NuoD"/>
    <property type="match status" value="1"/>
</dbReference>
<dbReference type="InterPro" id="IPR001135">
    <property type="entry name" value="NADH_Q_OxRdtase_suD"/>
</dbReference>
<dbReference type="InterPro" id="IPR022885">
    <property type="entry name" value="NDH1_su_D/H"/>
</dbReference>
<dbReference type="InterPro" id="IPR029014">
    <property type="entry name" value="NiFe-Hase_large"/>
</dbReference>
<dbReference type="NCBIfam" id="TIGR01962">
    <property type="entry name" value="NuoD"/>
    <property type="match status" value="1"/>
</dbReference>
<dbReference type="NCBIfam" id="NF004739">
    <property type="entry name" value="PRK06075.1"/>
    <property type="match status" value="1"/>
</dbReference>
<dbReference type="PANTHER" id="PTHR11993:SF10">
    <property type="entry name" value="NADH DEHYDROGENASE [UBIQUINONE] IRON-SULFUR PROTEIN 2, MITOCHONDRIAL"/>
    <property type="match status" value="1"/>
</dbReference>
<dbReference type="PANTHER" id="PTHR11993">
    <property type="entry name" value="NADH-UBIQUINONE OXIDOREDUCTASE 49 KDA SUBUNIT"/>
    <property type="match status" value="1"/>
</dbReference>
<dbReference type="Pfam" id="PF00346">
    <property type="entry name" value="Complex1_49kDa"/>
    <property type="match status" value="1"/>
</dbReference>
<dbReference type="SUPFAM" id="SSF56762">
    <property type="entry name" value="HydB/Nqo4-like"/>
    <property type="match status" value="1"/>
</dbReference>
<sequence length="409" mass="46440">MSESEIPGQVVVDLEADQSAEGGRRMVLNMGPQHPSTHGVLRLLMELDGENIMKCVPDIGFLHTGIEKEFEEKFYQQAVTLTDRVDYLAPLSNNLGWCLAVEKLLQLEIPPQAQWMRVMLTELTRLNSHLVWLGTHALDIGAMSVFLYCFREREEILKIFELFSGQRMMTSYFRIGGLALEPPRGWQQRVKKFLDVFPSRIDEYENLLTNNRIWTGRTKGIGFISLEDMLDLGITGPMLRAAGLKIDARKDAPYSSYEKFDFEVPTSTDNDVFARYQVRVEEMRQSTKIVRQAMEGMPAGAWKADAPHVVLPDREKMKTQMEALIFHFKIVTEGFRVPEGEVYQVIESPRGELGYYVVSDGTTKPYRVHMRTPSFGNLQAVPKMVEGSLIADVIASIGSMDFVLGDTDR</sequence>
<evidence type="ECO:0000255" key="1">
    <source>
        <dbReference type="HAMAP-Rule" id="MF_01358"/>
    </source>
</evidence>
<proteinExistence type="inferred from homology"/>
<organism>
    <name type="scientific">Solibacter usitatus (strain Ellin6076)</name>
    <dbReference type="NCBI Taxonomy" id="234267"/>
    <lineage>
        <taxon>Bacteria</taxon>
        <taxon>Pseudomonadati</taxon>
        <taxon>Acidobacteriota</taxon>
        <taxon>Terriglobia</taxon>
        <taxon>Bryobacterales</taxon>
        <taxon>Solibacteraceae</taxon>
        <taxon>Candidatus Solibacter</taxon>
    </lineage>
</organism>
<accession>Q02CU0</accession>
<comment type="function">
    <text evidence="1">NDH-1 shuttles electrons from NADH, via FMN and iron-sulfur (Fe-S) centers, to quinones in the respiratory chain. The immediate electron acceptor for the enzyme in this species is believed to be ubiquinone. Couples the redox reaction to proton translocation (for every two electrons transferred, four hydrogen ions are translocated across the cytoplasmic membrane), and thus conserves the redox energy in a proton gradient.</text>
</comment>
<comment type="catalytic activity">
    <reaction evidence="1">
        <text>a quinone + NADH + 5 H(+)(in) = a quinol + NAD(+) + 4 H(+)(out)</text>
        <dbReference type="Rhea" id="RHEA:57888"/>
        <dbReference type="ChEBI" id="CHEBI:15378"/>
        <dbReference type="ChEBI" id="CHEBI:24646"/>
        <dbReference type="ChEBI" id="CHEBI:57540"/>
        <dbReference type="ChEBI" id="CHEBI:57945"/>
        <dbReference type="ChEBI" id="CHEBI:132124"/>
    </reaction>
</comment>
<comment type="subunit">
    <text evidence="1">NDH-1 is composed of 14 different subunits. Subunits NuoB, C, D, E, F, and G constitute the peripheral sector of the complex.</text>
</comment>
<comment type="subcellular location">
    <subcellularLocation>
        <location evidence="1">Cell inner membrane</location>
        <topology evidence="1">Peripheral membrane protein</topology>
        <orientation evidence="1">Cytoplasmic side</orientation>
    </subcellularLocation>
</comment>
<comment type="similarity">
    <text evidence="1">Belongs to the complex I 49 kDa subunit family.</text>
</comment>
<keyword id="KW-0997">Cell inner membrane</keyword>
<keyword id="KW-1003">Cell membrane</keyword>
<keyword id="KW-0472">Membrane</keyword>
<keyword id="KW-0520">NAD</keyword>
<keyword id="KW-0874">Quinone</keyword>
<keyword id="KW-1278">Translocase</keyword>
<keyword id="KW-0813">Transport</keyword>
<keyword id="KW-0830">Ubiquinone</keyword>
<reference key="1">
    <citation type="journal article" date="2009" name="Appl. Environ. Microbiol.">
        <title>Three genomes from the phylum Acidobacteria provide insight into the lifestyles of these microorganisms in soils.</title>
        <authorList>
            <person name="Ward N.L."/>
            <person name="Challacombe J.F."/>
            <person name="Janssen P.H."/>
            <person name="Henrissat B."/>
            <person name="Coutinho P.M."/>
            <person name="Wu M."/>
            <person name="Xie G."/>
            <person name="Haft D.H."/>
            <person name="Sait M."/>
            <person name="Badger J."/>
            <person name="Barabote R.D."/>
            <person name="Bradley B."/>
            <person name="Brettin T.S."/>
            <person name="Brinkac L.M."/>
            <person name="Bruce D."/>
            <person name="Creasy T."/>
            <person name="Daugherty S.C."/>
            <person name="Davidsen T.M."/>
            <person name="DeBoy R.T."/>
            <person name="Detter J.C."/>
            <person name="Dodson R.J."/>
            <person name="Durkin A.S."/>
            <person name="Ganapathy A."/>
            <person name="Gwinn-Giglio M."/>
            <person name="Han C.S."/>
            <person name="Khouri H."/>
            <person name="Kiss H."/>
            <person name="Kothari S.P."/>
            <person name="Madupu R."/>
            <person name="Nelson K.E."/>
            <person name="Nelson W.C."/>
            <person name="Paulsen I."/>
            <person name="Penn K."/>
            <person name="Ren Q."/>
            <person name="Rosovitz M.J."/>
            <person name="Selengut J.D."/>
            <person name="Shrivastava S."/>
            <person name="Sullivan S.A."/>
            <person name="Tapia R."/>
            <person name="Thompson L.S."/>
            <person name="Watkins K.L."/>
            <person name="Yang Q."/>
            <person name="Yu C."/>
            <person name="Zafar N."/>
            <person name="Zhou L."/>
            <person name="Kuske C.R."/>
        </authorList>
    </citation>
    <scope>NUCLEOTIDE SEQUENCE [LARGE SCALE GENOMIC DNA]</scope>
    <source>
        <strain>Ellin6076</strain>
    </source>
</reference>